<organism>
    <name type="scientific">Thermoproteus tenax</name>
    <dbReference type="NCBI Taxonomy" id="2271"/>
    <lineage>
        <taxon>Archaea</taxon>
        <taxon>Thermoproteota</taxon>
        <taxon>Thermoprotei</taxon>
        <taxon>Thermoproteales</taxon>
        <taxon>Thermoproteaceae</taxon>
        <taxon>Thermoproteus</taxon>
    </lineage>
</organism>
<evidence type="ECO:0000269" key="1">
    <source>
    </source>
</evidence>
<evidence type="ECO:0000269" key="2">
    <source>
    </source>
</evidence>
<evidence type="ECO:0000269" key="3">
    <source>
    </source>
</evidence>
<evidence type="ECO:0000303" key="4">
    <source>
    </source>
</evidence>
<evidence type="ECO:0000305" key="5"/>
<evidence type="ECO:0007829" key="6">
    <source>
        <dbReference type="PDB" id="2R91"/>
    </source>
</evidence>
<proteinExistence type="evidence at protein level"/>
<comment type="function">
    <text evidence="1 2 3">Involved in the degradation of glucose via the Entner-Doudoroff pathway. Catalyzes the reversible cleavage of 2-keto-3-deoxy-6-phosphogluconate (KDPG) and 2-keto-3-deoxygluconate (KDG) forming pyruvate and glyceraldehyde 3-phosphate or glyceraldehyde, respectively. It is not able to use 2-keto-3-deoxy-6-phosphogalactonate (KDPGal) and 2-keto-3-deoxygalactonate (KDGal) as substrate.</text>
</comment>
<comment type="catalytic activity">
    <reaction evidence="2 3">
        <text>2-dehydro-3-deoxy-6-phospho-D-gluconate = D-glyceraldehyde 3-phosphate + pyruvate</text>
        <dbReference type="Rhea" id="RHEA:17089"/>
        <dbReference type="ChEBI" id="CHEBI:15361"/>
        <dbReference type="ChEBI" id="CHEBI:57569"/>
        <dbReference type="ChEBI" id="CHEBI:59776"/>
        <dbReference type="EC" id="4.1.2.14"/>
    </reaction>
</comment>
<comment type="catalytic activity">
    <reaction evidence="2 3">
        <text>2-dehydro-3-deoxy-D-gluconate = D-glyceraldehyde + pyruvate</text>
        <dbReference type="Rhea" id="RHEA:35583"/>
        <dbReference type="ChEBI" id="CHEBI:15361"/>
        <dbReference type="ChEBI" id="CHEBI:17378"/>
        <dbReference type="ChEBI" id="CHEBI:57990"/>
        <dbReference type="EC" id="4.1.2.51"/>
    </reaction>
</comment>
<comment type="pathway">
    <text>Carbohydrate acid metabolism; 2-dehydro-3-deoxy-D-gluconate degradation; D-glyceraldehyde 3-phosphate and pyruvate from 2-dehydro-3-deoxy-D-gluconate: step 2/2.</text>
</comment>
<comment type="subunit">
    <text evidence="3">Homotetramer; dimer of dimers.</text>
</comment>
<comment type="similarity">
    <text evidence="5">Belongs to the DapA family. KDPG aldolase subfamily.</text>
</comment>
<feature type="chain" id="PRO_0000422660" description="2-dehydro-3-deoxy-D-gluconate/2-dehydro-3-deoxy-phosphogluconate aldolase">
    <location>
        <begin position="1"/>
        <end position="306"/>
    </location>
</feature>
<feature type="active site" description="Schiff-base intermediate with substrate" evidence="3">
    <location>
        <position position="173"/>
    </location>
</feature>
<feature type="binding site">
    <location>
        <begin position="61"/>
        <end position="62"/>
    </location>
    <ligand>
        <name>substrate</name>
    </ligand>
</feature>
<feature type="binding site" evidence="5">
    <location>
        <begin position="148"/>
        <end position="150"/>
    </location>
    <ligand>
        <name>substrate</name>
    </ligand>
</feature>
<feature type="binding site">
    <location>
        <begin position="173"/>
        <end position="175"/>
    </location>
    <ligand>
        <name>substrate</name>
    </ligand>
</feature>
<feature type="site" description="Proton shuttle">
    <location>
        <position position="148"/>
    </location>
</feature>
<feature type="strand" evidence="6">
    <location>
        <begin position="22"/>
        <end position="26"/>
    </location>
</feature>
<feature type="helix" evidence="6">
    <location>
        <begin position="38"/>
        <end position="50"/>
    </location>
</feature>
<feature type="strand" evidence="6">
    <location>
        <begin position="55"/>
        <end position="58"/>
    </location>
</feature>
<feature type="turn" evidence="6">
    <location>
        <begin position="61"/>
        <end position="64"/>
    </location>
</feature>
<feature type="helix" evidence="6">
    <location>
        <begin position="65"/>
        <end position="67"/>
    </location>
</feature>
<feature type="helix" evidence="6">
    <location>
        <begin position="70"/>
        <end position="83"/>
    </location>
</feature>
<feature type="strand" evidence="6">
    <location>
        <begin position="85"/>
        <end position="90"/>
    </location>
</feature>
<feature type="helix" evidence="6">
    <location>
        <begin position="96"/>
        <end position="108"/>
    </location>
</feature>
<feature type="strand" evidence="6">
    <location>
        <begin position="112"/>
        <end position="116"/>
    </location>
</feature>
<feature type="helix" evidence="6">
    <location>
        <begin position="127"/>
        <end position="140"/>
    </location>
</feature>
<feature type="strand" evidence="6">
    <location>
        <begin position="145"/>
        <end position="149"/>
    </location>
</feature>
<feature type="helix" evidence="6">
    <location>
        <begin position="151"/>
        <end position="154"/>
    </location>
</feature>
<feature type="helix" evidence="6">
    <location>
        <begin position="160"/>
        <end position="166"/>
    </location>
</feature>
<feature type="strand" evidence="6">
    <location>
        <begin position="169"/>
        <end position="174"/>
    </location>
</feature>
<feature type="helix" evidence="6">
    <location>
        <begin position="179"/>
        <end position="188"/>
    </location>
</feature>
<feature type="strand" evidence="6">
    <location>
        <begin position="192"/>
        <end position="196"/>
    </location>
</feature>
<feature type="helix" evidence="6">
    <location>
        <begin position="199"/>
        <end position="201"/>
    </location>
</feature>
<feature type="helix" evidence="6">
    <location>
        <begin position="202"/>
        <end position="207"/>
    </location>
</feature>
<feature type="strand" evidence="6">
    <location>
        <begin position="211"/>
        <end position="213"/>
    </location>
</feature>
<feature type="helix" evidence="6">
    <location>
        <begin position="216"/>
        <end position="218"/>
    </location>
</feature>
<feature type="helix" evidence="6">
    <location>
        <begin position="222"/>
        <end position="233"/>
    </location>
</feature>
<feature type="helix" evidence="6">
    <location>
        <begin position="237"/>
        <end position="257"/>
    </location>
</feature>
<feature type="helix" evidence="6">
    <location>
        <begin position="259"/>
        <end position="271"/>
    </location>
</feature>
<feature type="helix" evidence="6">
    <location>
        <begin position="287"/>
        <end position="296"/>
    </location>
</feature>
<feature type="helix" evidence="6">
    <location>
        <begin position="298"/>
        <end position="302"/>
    </location>
</feature>
<name>KDGA_THETE</name>
<keyword id="KW-0002">3D-structure</keyword>
<keyword id="KW-0119">Carbohydrate metabolism</keyword>
<keyword id="KW-0456">Lyase</keyword>
<keyword id="KW-0704">Schiff base</keyword>
<accession>Q704D1</accession>
<dbReference type="EC" id="4.1.2.14" evidence="2 3"/>
<dbReference type="EC" id="4.1.2.51" evidence="2 3"/>
<dbReference type="EMBL" id="AJ621282">
    <property type="protein sequence ID" value="CAF18463.1"/>
    <property type="molecule type" value="Genomic_DNA"/>
</dbReference>
<dbReference type="PDB" id="2R91">
    <property type="method" value="X-ray"/>
    <property type="resolution" value="2.00 A"/>
    <property type="chains" value="A/B/C/D=21-306"/>
</dbReference>
<dbReference type="PDB" id="2R94">
    <property type="method" value="X-ray"/>
    <property type="resolution" value="2.20 A"/>
    <property type="chains" value="A/B/C/D=21-306"/>
</dbReference>
<dbReference type="PDBsum" id="2R91"/>
<dbReference type="PDBsum" id="2R94"/>
<dbReference type="SMR" id="Q704D1"/>
<dbReference type="BRENDA" id="4.1.2.14">
    <property type="organism ID" value="6329"/>
</dbReference>
<dbReference type="UniPathway" id="UPA00856">
    <property type="reaction ID" value="UER00829"/>
</dbReference>
<dbReference type="EvolutionaryTrace" id="Q704D1"/>
<dbReference type="GO" id="GO:0061677">
    <property type="term" value="F:2-dehydro-3-deoxy-D-gluconate aldolase activity"/>
    <property type="evidence" value="ECO:0007669"/>
    <property type="project" value="UniProtKB-EC"/>
</dbReference>
<dbReference type="GO" id="GO:0008675">
    <property type="term" value="F:2-dehydro-3-deoxy-phosphogluconate aldolase activity"/>
    <property type="evidence" value="ECO:0000314"/>
    <property type="project" value="UniProtKB"/>
</dbReference>
<dbReference type="GO" id="GO:0008840">
    <property type="term" value="F:4-hydroxy-tetrahydrodipicolinate synthase activity"/>
    <property type="evidence" value="ECO:0007669"/>
    <property type="project" value="TreeGrafter"/>
</dbReference>
<dbReference type="CDD" id="cd00953">
    <property type="entry name" value="KDG_aldolase"/>
    <property type="match status" value="1"/>
</dbReference>
<dbReference type="FunFam" id="3.20.20.70:FF:000289">
    <property type="entry name" value="2-dehydro-3-deoxy-phosphogluconate/2-dehydro-3-deoxy-6-phosphogalactonate aldolase"/>
    <property type="match status" value="1"/>
</dbReference>
<dbReference type="Gene3D" id="3.20.20.70">
    <property type="entry name" value="Aldolase class I"/>
    <property type="match status" value="1"/>
</dbReference>
<dbReference type="InterPro" id="IPR013785">
    <property type="entry name" value="Aldolase_TIM"/>
</dbReference>
<dbReference type="InterPro" id="IPR002220">
    <property type="entry name" value="DapA-like"/>
</dbReference>
<dbReference type="InterPro" id="IPR053415">
    <property type="entry name" value="ED_pathway_aldolase"/>
</dbReference>
<dbReference type="NCBIfam" id="NF040954">
    <property type="entry name" value="Arch_KDGaldase"/>
    <property type="match status" value="1"/>
</dbReference>
<dbReference type="PANTHER" id="PTHR12128:SF66">
    <property type="entry name" value="4-HYDROXY-2-OXOGLUTARATE ALDOLASE, MITOCHONDRIAL"/>
    <property type="match status" value="1"/>
</dbReference>
<dbReference type="PANTHER" id="PTHR12128">
    <property type="entry name" value="DIHYDRODIPICOLINATE SYNTHASE"/>
    <property type="match status" value="1"/>
</dbReference>
<dbReference type="Pfam" id="PF00701">
    <property type="entry name" value="DHDPS"/>
    <property type="match status" value="1"/>
</dbReference>
<dbReference type="PIRSF" id="PIRSF001365">
    <property type="entry name" value="DHDPS"/>
    <property type="match status" value="1"/>
</dbReference>
<dbReference type="PRINTS" id="PR00146">
    <property type="entry name" value="DHPICSNTHASE"/>
</dbReference>
<dbReference type="SMART" id="SM01130">
    <property type="entry name" value="DHDPS"/>
    <property type="match status" value="1"/>
</dbReference>
<dbReference type="SUPFAM" id="SSF51569">
    <property type="entry name" value="Aldolase"/>
    <property type="match status" value="1"/>
</dbReference>
<reference key="1">
    <citation type="journal article" date="2004" name="J. Bacteriol.">
        <title>Reconstruction of the central carbohydrate metabolism of Thermoproteus tenax using genomic and biochemical data.</title>
        <authorList>
            <person name="Siebers B."/>
            <person name="Tjaden B."/>
            <person name="Michalke K."/>
            <person name="Doerr C."/>
            <person name="Ahmed H."/>
            <person name="Zaparty M."/>
            <person name="Gordon P."/>
            <person name="Sensen C.W."/>
            <person name="Zibat A."/>
            <person name="Klenk H.-P."/>
            <person name="Schuster S.C."/>
            <person name="Hensel R."/>
        </authorList>
    </citation>
    <scope>NUCLEOTIDE SEQUENCE [GENOMIC DNA]</scope>
    <scope>FUNCTION</scope>
</reference>
<reference key="2">
    <citation type="journal article" date="2005" name="Biochem. J.">
        <title>The semi-phosphorylative Entner-Doudoroff pathway in hyperthermophilic archaea: a re-evaluation.</title>
        <authorList>
            <person name="Ahmed H."/>
            <person name="Ettema T.J."/>
            <person name="Tjaden B."/>
            <person name="Geerling A.C."/>
            <person name="van der Oost J."/>
            <person name="Siebers B."/>
        </authorList>
    </citation>
    <scope>FUNCTION</scope>
    <scope>CATALYTIC ACTIVITY</scope>
    <scope>SUBSTRATE SPECIFICITY</scope>
</reference>
<reference key="3">
    <citation type="journal article" date="2008" name="Proteins">
        <title>Crystal structure and stereochemical studies of KD(P)G aldolase from Thermoproteus tenax.</title>
        <authorList>
            <person name="Pauluhn A."/>
            <person name="Ahmed H."/>
            <person name="Lorentzen E."/>
            <person name="Buchinger S."/>
            <person name="Schomburg D."/>
            <person name="Siebers B."/>
            <person name="Pohl E."/>
        </authorList>
    </citation>
    <scope>X-RAY CRYSTALLOGRAPHY (2.00 ANGSTROMS) OF 21-306 IN COMPLEX WITH SUBSTRATE</scope>
    <scope>FUNCTION</scope>
    <scope>CATALYTIC ACTIVITY</scope>
    <scope>ACTIVE SITE</scope>
    <scope>SUBSTRATE SPECIFICITY</scope>
    <scope>SUBUNIT</scope>
</reference>
<gene>
    <name type="primary">kdgA</name>
</gene>
<protein>
    <recommendedName>
        <fullName>2-dehydro-3-deoxy-D-gluconate/2-dehydro-3-deoxy-phosphogluconate aldolase</fullName>
        <shortName evidence="4">KD(P)G aldolase</shortName>
        <ecNumber evidence="2 3">4.1.2.14</ecNumber>
        <ecNumber evidence="2 3">4.1.2.51</ecNumber>
    </recommendedName>
</protein>
<sequence>MSHPLIPFRANFLRAPRVLSMEIVAPVITTFRGGRLDPELFANHVKNITSKGVDVVFVAGTTGLGPALSLQEKMELTDAATSAARRVIVQVASLNADEAIALAKYAESRGAEAVASLPPYYFPRLSERQIAKYFRDLCSAVSIPVFLYNYPAAVGRDVDARAAKELGCIRGVKDTNESLAHTLAYKRYLPQARVYNGSDSLVFASFAVRLDGVVASSANYLPELLAGIRDAVAAGDIERARSLQFLLDEIVESARHIGYAAAVYELVEIFQGYEAGEPRGPVYPLDPEEKAWLRAAVAKAKSQLRL</sequence>